<keyword id="KW-0025">Alternative splicing</keyword>
<keyword id="KW-1003">Cell membrane</keyword>
<keyword id="KW-0175">Coiled coil</keyword>
<keyword id="KW-0333">Golgi apparatus</keyword>
<keyword id="KW-0472">Membrane</keyword>
<keyword id="KW-0653">Protein transport</keyword>
<keyword id="KW-1185">Reference proteome</keyword>
<keyword id="KW-0813">Transport</keyword>
<dbReference type="EMBL" id="AC006841">
    <property type="protein sequence ID" value="AAD23696.1"/>
    <property type="status" value="ALT_SEQ"/>
    <property type="molecule type" value="Genomic_DNA"/>
</dbReference>
<dbReference type="EMBL" id="CP002685">
    <property type="protein sequence ID" value="AEC07189.1"/>
    <property type="molecule type" value="Genomic_DNA"/>
</dbReference>
<dbReference type="EMBL" id="AK176447">
    <property type="protein sequence ID" value="BAD44210.1"/>
    <property type="molecule type" value="mRNA"/>
</dbReference>
<dbReference type="PIR" id="C84602">
    <property type="entry name" value="C84602"/>
</dbReference>
<dbReference type="RefSeq" id="NP_179747.4">
    <molecule id="F4IHJ0-1"/>
    <property type="nucleotide sequence ID" value="NM_127724.7"/>
</dbReference>
<dbReference type="SMR" id="F4IHJ0"/>
<dbReference type="FunCoup" id="F4IHJ0">
    <property type="interactions" value="686"/>
</dbReference>
<dbReference type="STRING" id="3702.F4IHJ0"/>
<dbReference type="iPTMnet" id="F4IHJ0"/>
<dbReference type="PaxDb" id="3702-AT2G21520.2"/>
<dbReference type="EnsemblPlants" id="AT2G21520.1">
    <molecule id="F4IHJ0-1"/>
    <property type="protein sequence ID" value="AT2G21520.1"/>
    <property type="gene ID" value="AT2G21520"/>
</dbReference>
<dbReference type="GeneID" id="816691"/>
<dbReference type="Gramene" id="AT2G21520.1">
    <molecule id="F4IHJ0-1"/>
    <property type="protein sequence ID" value="AT2G21520.1"/>
    <property type="gene ID" value="AT2G21520"/>
</dbReference>
<dbReference type="KEGG" id="ath:AT2G21520"/>
<dbReference type="Araport" id="AT2G21520"/>
<dbReference type="TAIR" id="AT2G21520"/>
<dbReference type="eggNOG" id="KOG1471">
    <property type="taxonomic scope" value="Eukaryota"/>
</dbReference>
<dbReference type="HOGENOM" id="CLU_014001_11_1_1"/>
<dbReference type="InParanoid" id="F4IHJ0"/>
<dbReference type="OMA" id="WKKEVSH"/>
<dbReference type="PRO" id="PR:F4IHJ0"/>
<dbReference type="Proteomes" id="UP000006548">
    <property type="component" value="Chromosome 2"/>
</dbReference>
<dbReference type="ExpressionAtlas" id="F4IHJ0">
    <property type="expression patterns" value="baseline and differential"/>
</dbReference>
<dbReference type="GO" id="GO:0000139">
    <property type="term" value="C:Golgi membrane"/>
    <property type="evidence" value="ECO:0007669"/>
    <property type="project" value="UniProtKB-SubCell"/>
</dbReference>
<dbReference type="GO" id="GO:0005886">
    <property type="term" value="C:plasma membrane"/>
    <property type="evidence" value="ECO:0007669"/>
    <property type="project" value="UniProtKB-SubCell"/>
</dbReference>
<dbReference type="GO" id="GO:0015031">
    <property type="term" value="P:protein transport"/>
    <property type="evidence" value="ECO:0007669"/>
    <property type="project" value="UniProtKB-KW"/>
</dbReference>
<dbReference type="CDD" id="cd00170">
    <property type="entry name" value="SEC14"/>
    <property type="match status" value="1"/>
</dbReference>
<dbReference type="FunFam" id="3.40.525.10:FF:000011">
    <property type="entry name" value="SEC14 cytosolic factor"/>
    <property type="match status" value="1"/>
</dbReference>
<dbReference type="Gene3D" id="3.40.525.10">
    <property type="entry name" value="CRAL-TRIO lipid binding domain"/>
    <property type="match status" value="1"/>
</dbReference>
<dbReference type="Gene3D" id="1.10.8.20">
    <property type="entry name" value="N-terminal domain of phosphatidylinositol transfer protein sec14p"/>
    <property type="match status" value="1"/>
</dbReference>
<dbReference type="InterPro" id="IPR001251">
    <property type="entry name" value="CRAL-TRIO_dom"/>
</dbReference>
<dbReference type="InterPro" id="IPR036865">
    <property type="entry name" value="CRAL-TRIO_dom_sf"/>
</dbReference>
<dbReference type="InterPro" id="IPR011074">
    <property type="entry name" value="CRAL/TRIO_N_dom"/>
</dbReference>
<dbReference type="InterPro" id="IPR036273">
    <property type="entry name" value="CRAL/TRIO_N_dom_sf"/>
</dbReference>
<dbReference type="InterPro" id="IPR051026">
    <property type="entry name" value="PI/PC_transfer"/>
</dbReference>
<dbReference type="PANTHER" id="PTHR45657">
    <property type="entry name" value="CRAL-TRIO DOMAIN-CONTAINING PROTEIN YKL091C-RELATED"/>
    <property type="match status" value="1"/>
</dbReference>
<dbReference type="PANTHER" id="PTHR45657:SF16">
    <property type="entry name" value="PHOSPHATIDYLINOSITOL_PHOSPHATIDYLCHOLINE TRANSFER PROTEIN SFH8"/>
    <property type="match status" value="1"/>
</dbReference>
<dbReference type="Pfam" id="PF00650">
    <property type="entry name" value="CRAL_TRIO"/>
    <property type="match status" value="1"/>
</dbReference>
<dbReference type="Pfam" id="PF03765">
    <property type="entry name" value="CRAL_TRIO_N"/>
    <property type="match status" value="1"/>
</dbReference>
<dbReference type="PRINTS" id="PR00180">
    <property type="entry name" value="CRETINALDHBP"/>
</dbReference>
<dbReference type="SMART" id="SM01100">
    <property type="entry name" value="CRAL_TRIO_N"/>
    <property type="match status" value="1"/>
</dbReference>
<dbReference type="SMART" id="SM00516">
    <property type="entry name" value="SEC14"/>
    <property type="match status" value="1"/>
</dbReference>
<dbReference type="SUPFAM" id="SSF52087">
    <property type="entry name" value="CRAL/TRIO domain"/>
    <property type="match status" value="1"/>
</dbReference>
<dbReference type="SUPFAM" id="SSF46938">
    <property type="entry name" value="CRAL/TRIO N-terminal domain"/>
    <property type="match status" value="1"/>
</dbReference>
<dbReference type="PROSITE" id="PS50191">
    <property type="entry name" value="CRAL_TRIO"/>
    <property type="match status" value="1"/>
</dbReference>
<evidence type="ECO:0000250" key="1"/>
<evidence type="ECO:0000255" key="2"/>
<evidence type="ECO:0000255" key="3">
    <source>
        <dbReference type="PROSITE-ProRule" id="PRU00056"/>
    </source>
</evidence>
<evidence type="ECO:0000256" key="4">
    <source>
        <dbReference type="SAM" id="MobiDB-lite"/>
    </source>
</evidence>
<evidence type="ECO:0000305" key="5"/>
<protein>
    <recommendedName>
        <fullName>Phosphatidylinositol/phosphatidylcholine transfer protein SFH8</fullName>
    </recommendedName>
    <alternativeName>
        <fullName>Protein SEC FOURTEEN HOMOLOGS 8</fullName>
        <shortName>AtSFH8</shortName>
    </alternativeName>
</protein>
<sequence>MSGPLDRFARPCFEGFLSSDEKKERKSDFENSEDERRTRIGSLKKKAINASTKFKHSLKKKSGRRKSDGRVSSVSIEDVRDVEELQAVDAFRQSLLMDELLPDRHDDYHMMLRFLKARKFDVEKAKQMWADMIQWRKEFGTDTIIQDFDFEEINEVLKHYPQCYHGVDKEGRPIYIERLGKVDPNRLMQVTSMDRYVRYHVKEFERSFMIKFPSCTISAKRHIDSSTTILDVQGVGLKNFNKSARDLITRLQKIDGDNYPETLHQMFIINAGPGFRLLWNTVKSFLDPKTSAKIHVLGYKYLSKLLEVIDVNELPEFLGGACTCADQGGCMLSDKGPWKNPEIVKMVLHGGAHRARQVVKVLNSEGKVIAYAKPSYTWIKGSDTSTAESGSDAEDIGSPKAIKSFSHLRLTPVREEAKIAGETSLAGSFPGYDEYVPMVDKAVDATWKVKPAIQRVASRGALMSPTVPKDHEGIKARVLVMFMAFLMAVFTFFRTVTKKLPATTTSSPAETQGNAIELGSNGEGVKEECRPPSPVPDLTETDLLNCVTKKLTELEGKIGTLQSKPNEMPYEKEELLNAAVCRVDALEAELIATKKALYEALMRQEELLAYIDRQEEAQFQKMKKKKKKHLFCF</sequence>
<proteinExistence type="evidence at transcript level"/>
<name>SFH8_ARATH</name>
<accession>F4IHJ0</accession>
<accession>Q67YM1</accession>
<accession>Q9SJS7</accession>
<comment type="function">
    <text evidence="1">Required for transport of secretory proteins from the Golgi complex. Catalyzes the transfer of phosphatidylinositol and phosphatidylcholine between membranes in vitro (By similarity).</text>
</comment>
<comment type="subcellular location">
    <subcellularLocation>
        <location evidence="1">Golgi apparatus membrane</location>
        <topology evidence="1">Peripheral membrane protein</topology>
    </subcellularLocation>
    <subcellularLocation>
        <location evidence="1">Cell membrane</location>
        <topology evidence="1">Peripheral membrane protein</topology>
    </subcellularLocation>
</comment>
<comment type="alternative products">
    <event type="alternative splicing"/>
    <isoform>
        <id>F4IHJ0-1</id>
        <name>1</name>
        <sequence type="displayed"/>
    </isoform>
    <text>A number of isoforms are produced. According to EST sequences.</text>
</comment>
<comment type="similarity">
    <text evidence="5">Belongs to the SFH family.</text>
</comment>
<comment type="sequence caution" evidence="5">
    <conflict type="erroneous gene model prediction">
        <sequence resource="EMBL-CDS" id="AAD23696"/>
    </conflict>
</comment>
<organism>
    <name type="scientific">Arabidopsis thaliana</name>
    <name type="common">Mouse-ear cress</name>
    <dbReference type="NCBI Taxonomy" id="3702"/>
    <lineage>
        <taxon>Eukaryota</taxon>
        <taxon>Viridiplantae</taxon>
        <taxon>Streptophyta</taxon>
        <taxon>Embryophyta</taxon>
        <taxon>Tracheophyta</taxon>
        <taxon>Spermatophyta</taxon>
        <taxon>Magnoliopsida</taxon>
        <taxon>eudicotyledons</taxon>
        <taxon>Gunneridae</taxon>
        <taxon>Pentapetalae</taxon>
        <taxon>rosids</taxon>
        <taxon>malvids</taxon>
        <taxon>Brassicales</taxon>
        <taxon>Brassicaceae</taxon>
        <taxon>Camelineae</taxon>
        <taxon>Arabidopsis</taxon>
    </lineage>
</organism>
<reference key="1">
    <citation type="journal article" date="1999" name="Nature">
        <title>Sequence and analysis of chromosome 2 of the plant Arabidopsis thaliana.</title>
        <authorList>
            <person name="Lin X."/>
            <person name="Kaul S."/>
            <person name="Rounsley S.D."/>
            <person name="Shea T.P."/>
            <person name="Benito M.-I."/>
            <person name="Town C.D."/>
            <person name="Fujii C.Y."/>
            <person name="Mason T.M."/>
            <person name="Bowman C.L."/>
            <person name="Barnstead M.E."/>
            <person name="Feldblyum T.V."/>
            <person name="Buell C.R."/>
            <person name="Ketchum K.A."/>
            <person name="Lee J.J."/>
            <person name="Ronning C.M."/>
            <person name="Koo H.L."/>
            <person name="Moffat K.S."/>
            <person name="Cronin L.A."/>
            <person name="Shen M."/>
            <person name="Pai G."/>
            <person name="Van Aken S."/>
            <person name="Umayam L."/>
            <person name="Tallon L.J."/>
            <person name="Gill J.E."/>
            <person name="Adams M.D."/>
            <person name="Carrera A.J."/>
            <person name="Creasy T.H."/>
            <person name="Goodman H.M."/>
            <person name="Somerville C.R."/>
            <person name="Copenhaver G.P."/>
            <person name="Preuss D."/>
            <person name="Nierman W.C."/>
            <person name="White O."/>
            <person name="Eisen J.A."/>
            <person name="Salzberg S.L."/>
            <person name="Fraser C.M."/>
            <person name="Venter J.C."/>
        </authorList>
    </citation>
    <scope>NUCLEOTIDE SEQUENCE [LARGE SCALE GENOMIC DNA]</scope>
    <source>
        <strain>cv. Columbia</strain>
    </source>
</reference>
<reference key="2">
    <citation type="journal article" date="2017" name="Plant J.">
        <title>Araport11: a complete reannotation of the Arabidopsis thaliana reference genome.</title>
        <authorList>
            <person name="Cheng C.Y."/>
            <person name="Krishnakumar V."/>
            <person name="Chan A.P."/>
            <person name="Thibaud-Nissen F."/>
            <person name="Schobel S."/>
            <person name="Town C.D."/>
        </authorList>
    </citation>
    <scope>GENOME REANNOTATION</scope>
    <source>
        <strain>cv. Columbia</strain>
    </source>
</reference>
<reference key="3">
    <citation type="submission" date="2004-09" db="EMBL/GenBank/DDBJ databases">
        <title>Large-scale analysis of RIKEN Arabidopsis full-length (RAFL) cDNAs.</title>
        <authorList>
            <person name="Totoki Y."/>
            <person name="Seki M."/>
            <person name="Ishida J."/>
            <person name="Nakajima M."/>
            <person name="Enju A."/>
            <person name="Kamiya A."/>
            <person name="Narusaka M."/>
            <person name="Shin-i T."/>
            <person name="Nakagawa M."/>
            <person name="Sakamoto N."/>
            <person name="Oishi K."/>
            <person name="Kohara Y."/>
            <person name="Kobayashi M."/>
            <person name="Toyoda A."/>
            <person name="Sakaki Y."/>
            <person name="Sakurai T."/>
            <person name="Iida K."/>
            <person name="Akiyama K."/>
            <person name="Satou M."/>
            <person name="Toyoda T."/>
            <person name="Konagaya A."/>
            <person name="Carninci P."/>
            <person name="Kawai J."/>
            <person name="Hayashizaki Y."/>
            <person name="Shinozaki K."/>
        </authorList>
    </citation>
    <scope>NUCLEOTIDE SEQUENCE [LARGE SCALE MRNA] OF 62-633</scope>
    <source>
        <strain>cv. Columbia</strain>
    </source>
</reference>
<reference key="4">
    <citation type="journal article" date="2005" name="J. Cell Biol.">
        <title>A Sec14p-nodulin domain phosphatidylinositol transfer protein polarizes membrane growth of Arabidopsis thaliana root hairs.</title>
        <authorList>
            <person name="Vincent P."/>
            <person name="Chua M."/>
            <person name="Nogue F."/>
            <person name="Fairbrother A."/>
            <person name="Mekeel H."/>
            <person name="Xu Y."/>
            <person name="Allen N."/>
            <person name="Bibikova T.N."/>
            <person name="Gilroy S."/>
            <person name="Bankaitis V.A."/>
        </authorList>
    </citation>
    <scope>GENE FAMILY</scope>
</reference>
<reference key="5">
    <citation type="journal article" date="2006" name="Nat. Chem. Biol.">
        <title>Phosphatidylinositol transfer proteins and cellular nanoreactors for lipid signaling.</title>
        <authorList>
            <person name="Ile K.E."/>
            <person name="Schaaf G."/>
            <person name="Bankaitis V.A."/>
        </authorList>
    </citation>
    <scope>REVIEW</scope>
</reference>
<gene>
    <name type="primary">SFH8</name>
    <name type="ordered locus">At2g21520</name>
    <name type="ORF">F3K23.28</name>
</gene>
<feature type="chain" id="PRO_0000423468" description="Phosphatidylinositol/phosphatidylcholine transfer protein SFH8">
    <location>
        <begin position="1"/>
        <end position="633"/>
    </location>
</feature>
<feature type="domain" description="CRAL-TRIO" evidence="3">
    <location>
        <begin position="152"/>
        <end position="326"/>
    </location>
</feature>
<feature type="region of interest" description="Disordered" evidence="4">
    <location>
        <begin position="19"/>
        <end position="70"/>
    </location>
</feature>
<feature type="region of interest" description="Disordered" evidence="4">
    <location>
        <begin position="503"/>
        <end position="534"/>
    </location>
</feature>
<feature type="coiled-coil region" evidence="2">
    <location>
        <begin position="571"/>
        <end position="593"/>
    </location>
</feature>
<feature type="compositionally biased region" description="Basic and acidic residues" evidence="4">
    <location>
        <begin position="19"/>
        <end position="38"/>
    </location>
</feature>
<feature type="compositionally biased region" description="Basic residues" evidence="4">
    <location>
        <begin position="42"/>
        <end position="64"/>
    </location>
</feature>
<feature type="compositionally biased region" description="Polar residues" evidence="4">
    <location>
        <begin position="503"/>
        <end position="514"/>
    </location>
</feature>